<reference key="1">
    <citation type="journal article" date="2002" name="Nucleic Acids Res.">
        <title>The complete genomic sequence of Mycoplasma penetrans, an intracellular bacterial pathogen in humans.</title>
        <authorList>
            <person name="Sasaki Y."/>
            <person name="Ishikawa J."/>
            <person name="Yamashita A."/>
            <person name="Oshima K."/>
            <person name="Kenri T."/>
            <person name="Furuya K."/>
            <person name="Yoshino C."/>
            <person name="Horino A."/>
            <person name="Shiba T."/>
            <person name="Sasaki T."/>
            <person name="Hattori M."/>
        </authorList>
    </citation>
    <scope>NUCLEOTIDE SEQUENCE [LARGE SCALE GENOMIC DNA]</scope>
    <source>
        <strain>HF-2</strain>
    </source>
</reference>
<keyword id="KW-1185">Reference proteome</keyword>
<keyword id="KW-0687">Ribonucleoprotein</keyword>
<keyword id="KW-0689">Ribosomal protein</keyword>
<evidence type="ECO:0000250" key="1">
    <source>
        <dbReference type="UniProtKB" id="Q2FXT0"/>
    </source>
</evidence>
<evidence type="ECO:0000255" key="2">
    <source>
        <dbReference type="HAMAP-Rule" id="MF_00539"/>
    </source>
</evidence>
<evidence type="ECO:0000256" key="3">
    <source>
        <dbReference type="SAM" id="MobiDB-lite"/>
    </source>
</evidence>
<evidence type="ECO:0000305" key="4"/>
<feature type="propeptide" id="PRO_0000459919" evidence="1">
    <location>
        <begin position="1"/>
        <end position="12"/>
    </location>
</feature>
<feature type="chain" id="PRO_0000181127" description="Large ribosomal subunit protein bL27">
    <location>
        <begin position="13"/>
        <end position="95"/>
    </location>
</feature>
<feature type="region of interest" description="Disordered" evidence="3">
    <location>
        <begin position="17"/>
        <end position="37"/>
    </location>
</feature>
<organism>
    <name type="scientific">Malacoplasma penetrans (strain HF-2)</name>
    <name type="common">Mycoplasma penetrans</name>
    <dbReference type="NCBI Taxonomy" id="272633"/>
    <lineage>
        <taxon>Bacteria</taxon>
        <taxon>Bacillati</taxon>
        <taxon>Mycoplasmatota</taxon>
        <taxon>Mycoplasmoidales</taxon>
        <taxon>Mycoplasmoidaceae</taxon>
        <taxon>Malacoplasma</taxon>
    </lineage>
</organism>
<sequence>MLLIKKINLQFFASKKGVGSTKNGRDSNPKYLGAKKSDGEFAKSGQIIYRQRGTKIYPGKNVGLGRDHTLFAKIDGIVKFTKFGDNKTKVSVIAK</sequence>
<gene>
    <name evidence="2" type="primary">rpmA</name>
    <name type="ordered locus">MYPE4440</name>
</gene>
<dbReference type="EMBL" id="BA000026">
    <property type="protein sequence ID" value="BAC44234.1"/>
    <property type="molecule type" value="Genomic_DNA"/>
</dbReference>
<dbReference type="RefSeq" id="WP_011077268.1">
    <property type="nucleotide sequence ID" value="NC_004432.1"/>
</dbReference>
<dbReference type="SMR" id="Q8EVW5"/>
<dbReference type="FunCoup" id="Q8EVW5">
    <property type="interactions" value="205"/>
</dbReference>
<dbReference type="STRING" id="272633.gene:10731560"/>
<dbReference type="KEGG" id="mpe:MYPE4440"/>
<dbReference type="eggNOG" id="COG0211">
    <property type="taxonomic scope" value="Bacteria"/>
</dbReference>
<dbReference type="HOGENOM" id="CLU_095424_4_0_14"/>
<dbReference type="InParanoid" id="Q8EVW5"/>
<dbReference type="Proteomes" id="UP000002522">
    <property type="component" value="Chromosome"/>
</dbReference>
<dbReference type="GO" id="GO:0022625">
    <property type="term" value="C:cytosolic large ribosomal subunit"/>
    <property type="evidence" value="ECO:0007669"/>
    <property type="project" value="TreeGrafter"/>
</dbReference>
<dbReference type="GO" id="GO:0003735">
    <property type="term" value="F:structural constituent of ribosome"/>
    <property type="evidence" value="ECO:0007669"/>
    <property type="project" value="InterPro"/>
</dbReference>
<dbReference type="GO" id="GO:0006412">
    <property type="term" value="P:translation"/>
    <property type="evidence" value="ECO:0007669"/>
    <property type="project" value="UniProtKB-UniRule"/>
</dbReference>
<dbReference type="FunFam" id="2.40.50.100:FF:000004">
    <property type="entry name" value="50S ribosomal protein L27"/>
    <property type="match status" value="1"/>
</dbReference>
<dbReference type="Gene3D" id="2.40.50.100">
    <property type="match status" value="1"/>
</dbReference>
<dbReference type="HAMAP" id="MF_00539">
    <property type="entry name" value="Ribosomal_bL27"/>
    <property type="match status" value="1"/>
</dbReference>
<dbReference type="InterPro" id="IPR001684">
    <property type="entry name" value="Ribosomal_bL27"/>
</dbReference>
<dbReference type="InterPro" id="IPR018261">
    <property type="entry name" value="Ribosomal_bL27_CS"/>
</dbReference>
<dbReference type="NCBIfam" id="TIGR00062">
    <property type="entry name" value="L27"/>
    <property type="match status" value="1"/>
</dbReference>
<dbReference type="PANTHER" id="PTHR15893:SF0">
    <property type="entry name" value="LARGE RIBOSOMAL SUBUNIT PROTEIN BL27M"/>
    <property type="match status" value="1"/>
</dbReference>
<dbReference type="PANTHER" id="PTHR15893">
    <property type="entry name" value="RIBOSOMAL PROTEIN L27"/>
    <property type="match status" value="1"/>
</dbReference>
<dbReference type="Pfam" id="PF01016">
    <property type="entry name" value="Ribosomal_L27"/>
    <property type="match status" value="1"/>
</dbReference>
<dbReference type="PRINTS" id="PR00063">
    <property type="entry name" value="RIBOSOMALL27"/>
</dbReference>
<dbReference type="SUPFAM" id="SSF110324">
    <property type="entry name" value="Ribosomal L27 protein-like"/>
    <property type="match status" value="1"/>
</dbReference>
<dbReference type="PROSITE" id="PS00831">
    <property type="entry name" value="RIBOSOMAL_L27"/>
    <property type="match status" value="1"/>
</dbReference>
<proteinExistence type="inferred from homology"/>
<accession>Q8EVW5</accession>
<protein>
    <recommendedName>
        <fullName evidence="2">Large ribosomal subunit protein bL27</fullName>
    </recommendedName>
    <alternativeName>
        <fullName evidence="4">50S ribosomal protein L27</fullName>
    </alternativeName>
</protein>
<comment type="PTM">
    <text evidence="1">The N-terminus is cleaved by ribosomal processing cysteine protease Prp.</text>
</comment>
<comment type="similarity">
    <text evidence="2">Belongs to the bacterial ribosomal protein bL27 family.</text>
</comment>
<name>RL27_MALP2</name>